<reference key="1">
    <citation type="journal article" date="2009" name="PLoS Genet.">
        <title>Organised genome dynamics in the Escherichia coli species results in highly diverse adaptive paths.</title>
        <authorList>
            <person name="Touchon M."/>
            <person name="Hoede C."/>
            <person name="Tenaillon O."/>
            <person name="Barbe V."/>
            <person name="Baeriswyl S."/>
            <person name="Bidet P."/>
            <person name="Bingen E."/>
            <person name="Bonacorsi S."/>
            <person name="Bouchier C."/>
            <person name="Bouvet O."/>
            <person name="Calteau A."/>
            <person name="Chiapello H."/>
            <person name="Clermont O."/>
            <person name="Cruveiller S."/>
            <person name="Danchin A."/>
            <person name="Diard M."/>
            <person name="Dossat C."/>
            <person name="Karoui M.E."/>
            <person name="Frapy E."/>
            <person name="Garry L."/>
            <person name="Ghigo J.M."/>
            <person name="Gilles A.M."/>
            <person name="Johnson J."/>
            <person name="Le Bouguenec C."/>
            <person name="Lescat M."/>
            <person name="Mangenot S."/>
            <person name="Martinez-Jehanne V."/>
            <person name="Matic I."/>
            <person name="Nassif X."/>
            <person name="Oztas S."/>
            <person name="Petit M.A."/>
            <person name="Pichon C."/>
            <person name="Rouy Z."/>
            <person name="Ruf C.S."/>
            <person name="Schneider D."/>
            <person name="Tourret J."/>
            <person name="Vacherie B."/>
            <person name="Vallenet D."/>
            <person name="Medigue C."/>
            <person name="Rocha E.P.C."/>
            <person name="Denamur E."/>
        </authorList>
    </citation>
    <scope>NUCLEOTIDE SEQUENCE [LARGE SCALE GENOMIC DNA]</scope>
    <source>
        <strain>IAI1</strain>
    </source>
</reference>
<comment type="similarity">
    <text evidence="1">Belongs to the bacterial ribosomal protein bL32 family.</text>
</comment>
<feature type="chain" id="PRO_1000120119" description="Large ribosomal subunit protein bL32">
    <location>
        <begin position="1"/>
        <end position="57"/>
    </location>
</feature>
<feature type="region of interest" description="Disordered" evidence="2">
    <location>
        <begin position="1"/>
        <end position="38"/>
    </location>
</feature>
<keyword id="KW-0687">Ribonucleoprotein</keyword>
<keyword id="KW-0689">Ribosomal protein</keyword>
<protein>
    <recommendedName>
        <fullName evidence="1">Large ribosomal subunit protein bL32</fullName>
    </recommendedName>
    <alternativeName>
        <fullName evidence="3">50S ribosomal protein L32</fullName>
    </alternativeName>
</protein>
<sequence>MAVQQNKPTRSKRGMRRSHDALTAVTSLSVDKTSGEKHLRHHITADGYYRGRKVIAK</sequence>
<name>RL32_ECO8A</name>
<dbReference type="EMBL" id="CU928160">
    <property type="protein sequence ID" value="CAQ97988.1"/>
    <property type="molecule type" value="Genomic_DNA"/>
</dbReference>
<dbReference type="RefSeq" id="WP_000290727.1">
    <property type="nucleotide sequence ID" value="NC_011741.1"/>
</dbReference>
<dbReference type="SMR" id="B7LX23"/>
<dbReference type="GeneID" id="93776319"/>
<dbReference type="KEGG" id="ecr:ECIAI1_1124"/>
<dbReference type="HOGENOM" id="CLU_129084_2_1_6"/>
<dbReference type="GO" id="GO:0015934">
    <property type="term" value="C:large ribosomal subunit"/>
    <property type="evidence" value="ECO:0007669"/>
    <property type="project" value="InterPro"/>
</dbReference>
<dbReference type="GO" id="GO:0003735">
    <property type="term" value="F:structural constituent of ribosome"/>
    <property type="evidence" value="ECO:0007669"/>
    <property type="project" value="InterPro"/>
</dbReference>
<dbReference type="GO" id="GO:0006412">
    <property type="term" value="P:translation"/>
    <property type="evidence" value="ECO:0007669"/>
    <property type="project" value="UniProtKB-UniRule"/>
</dbReference>
<dbReference type="HAMAP" id="MF_00340">
    <property type="entry name" value="Ribosomal_bL32"/>
    <property type="match status" value="1"/>
</dbReference>
<dbReference type="InterPro" id="IPR002677">
    <property type="entry name" value="Ribosomal_bL32"/>
</dbReference>
<dbReference type="InterPro" id="IPR044957">
    <property type="entry name" value="Ribosomal_bL32_bact"/>
</dbReference>
<dbReference type="InterPro" id="IPR011332">
    <property type="entry name" value="Ribosomal_zn-bd"/>
</dbReference>
<dbReference type="NCBIfam" id="TIGR01031">
    <property type="entry name" value="rpmF_bact"/>
    <property type="match status" value="1"/>
</dbReference>
<dbReference type="PANTHER" id="PTHR35534">
    <property type="entry name" value="50S RIBOSOMAL PROTEIN L32"/>
    <property type="match status" value="1"/>
</dbReference>
<dbReference type="PANTHER" id="PTHR35534:SF1">
    <property type="entry name" value="LARGE RIBOSOMAL SUBUNIT PROTEIN BL32"/>
    <property type="match status" value="1"/>
</dbReference>
<dbReference type="Pfam" id="PF01783">
    <property type="entry name" value="Ribosomal_L32p"/>
    <property type="match status" value="1"/>
</dbReference>
<dbReference type="SUPFAM" id="SSF57829">
    <property type="entry name" value="Zn-binding ribosomal proteins"/>
    <property type="match status" value="1"/>
</dbReference>
<evidence type="ECO:0000255" key="1">
    <source>
        <dbReference type="HAMAP-Rule" id="MF_00340"/>
    </source>
</evidence>
<evidence type="ECO:0000256" key="2">
    <source>
        <dbReference type="SAM" id="MobiDB-lite"/>
    </source>
</evidence>
<evidence type="ECO:0000305" key="3"/>
<organism>
    <name type="scientific">Escherichia coli O8 (strain IAI1)</name>
    <dbReference type="NCBI Taxonomy" id="585034"/>
    <lineage>
        <taxon>Bacteria</taxon>
        <taxon>Pseudomonadati</taxon>
        <taxon>Pseudomonadota</taxon>
        <taxon>Gammaproteobacteria</taxon>
        <taxon>Enterobacterales</taxon>
        <taxon>Enterobacteriaceae</taxon>
        <taxon>Escherichia</taxon>
    </lineage>
</organism>
<accession>B7LX23</accession>
<gene>
    <name evidence="1" type="primary">rpmF</name>
    <name type="ordered locus">ECIAI1_1124</name>
</gene>
<proteinExistence type="inferred from homology"/>